<proteinExistence type="inferred from homology"/>
<accession>C1FKZ3</accession>
<feature type="chain" id="PRO_1000187352" description="5-deoxyribose 1-phosphate isomerase">
    <location>
        <begin position="1"/>
        <end position="349"/>
    </location>
</feature>
<feature type="active site" description="Proton donor" evidence="1">
    <location>
        <position position="240"/>
    </location>
</feature>
<feature type="binding site" evidence="1">
    <location>
        <begin position="49"/>
        <end position="51"/>
    </location>
    <ligand>
        <name>substrate</name>
    </ligand>
</feature>
<feature type="binding site" evidence="1">
    <location>
        <position position="92"/>
    </location>
    <ligand>
        <name>substrate</name>
    </ligand>
</feature>
<feature type="binding site" evidence="1">
    <location>
        <position position="199"/>
    </location>
    <ligand>
        <name>substrate</name>
    </ligand>
</feature>
<feature type="binding site" evidence="1">
    <location>
        <begin position="250"/>
        <end position="251"/>
    </location>
    <ligand>
        <name>substrate</name>
    </ligand>
</feature>
<feature type="site" description="Transition state stabilizer" evidence="1">
    <location>
        <position position="160"/>
    </location>
</feature>
<keyword id="KW-0119">Carbohydrate metabolism</keyword>
<keyword id="KW-0413">Isomerase</keyword>
<reference key="1">
    <citation type="submission" date="2008-10" db="EMBL/GenBank/DDBJ databases">
        <title>Genome sequence of Clostridium botulinum A2 Kyoto.</title>
        <authorList>
            <person name="Shrivastava S."/>
            <person name="Brinkac L.M."/>
            <person name="Brown J.L."/>
            <person name="Bruce D."/>
            <person name="Detter C.C."/>
            <person name="Johnson E.A."/>
            <person name="Munk C.A."/>
            <person name="Smith L.A."/>
            <person name="Smith T.J."/>
            <person name="Sutton G."/>
            <person name="Brettin T.S."/>
        </authorList>
    </citation>
    <scope>NUCLEOTIDE SEQUENCE [LARGE SCALE GENOMIC DNA]</scope>
    <source>
        <strain>Kyoto / Type A2</strain>
    </source>
</reference>
<gene>
    <name evidence="1" type="primary">drdI</name>
    <name type="ordered locus">CLM_1427</name>
</gene>
<evidence type="ECO:0000255" key="1">
    <source>
        <dbReference type="HAMAP-Rule" id="MF_02229"/>
    </source>
</evidence>
<name>DRDI_CLOBJ</name>
<comment type="function">
    <text evidence="1">Catalyzes the isomerization of 5-deoxy-alpha-D-ribose 1-phosphate to 5-deoxy-D-ribulose 1-phosphate, as part of a 5-deoxyribose salvage pathway that recycles this toxic radical SAM enzyme by-product to mainstream metabolites.</text>
</comment>
<comment type="catalytic activity">
    <reaction evidence="1">
        <text>5-deoxy-alpha-D-ribose 1-phosphate = 5-deoxy-D-ribulose 1-phosphate</text>
        <dbReference type="Rhea" id="RHEA:61296"/>
        <dbReference type="ChEBI" id="CHEBI:58749"/>
        <dbReference type="ChEBI" id="CHEBI:144504"/>
    </reaction>
    <physiologicalReaction direction="left-to-right" evidence="1">
        <dbReference type="Rhea" id="RHEA:61297"/>
    </physiologicalReaction>
</comment>
<comment type="pathway">
    <text evidence="1">Carbohydrate degradation.</text>
</comment>
<comment type="similarity">
    <text evidence="1">Belongs to the EIF-2B alpha/beta/delta subunits family. DrdI subfamily.</text>
</comment>
<organism>
    <name type="scientific">Clostridium botulinum (strain Kyoto / Type A2)</name>
    <dbReference type="NCBI Taxonomy" id="536232"/>
    <lineage>
        <taxon>Bacteria</taxon>
        <taxon>Bacillati</taxon>
        <taxon>Bacillota</taxon>
        <taxon>Clostridia</taxon>
        <taxon>Eubacteriales</taxon>
        <taxon>Clostridiaceae</taxon>
        <taxon>Clostridium</taxon>
    </lineage>
</organism>
<protein>
    <recommendedName>
        <fullName evidence="1">5-deoxyribose 1-phosphate isomerase</fullName>
        <ecNumber evidence="1">5.3.1.-</ecNumber>
    </recommendedName>
</protein>
<dbReference type="EC" id="5.3.1.-" evidence="1"/>
<dbReference type="EMBL" id="CP001581">
    <property type="protein sequence ID" value="ACO86021.1"/>
    <property type="molecule type" value="Genomic_DNA"/>
</dbReference>
<dbReference type="SMR" id="C1FKZ3"/>
<dbReference type="KEGG" id="cby:CLM_1427"/>
<dbReference type="eggNOG" id="COG0182">
    <property type="taxonomic scope" value="Bacteria"/>
</dbReference>
<dbReference type="HOGENOM" id="CLU_016218_1_2_9"/>
<dbReference type="Proteomes" id="UP000001374">
    <property type="component" value="Chromosome"/>
</dbReference>
<dbReference type="GO" id="GO:0046523">
    <property type="term" value="F:S-methyl-5-thioribose-1-phosphate isomerase activity"/>
    <property type="evidence" value="ECO:0007669"/>
    <property type="project" value="InterPro"/>
</dbReference>
<dbReference type="GO" id="GO:0019509">
    <property type="term" value="P:L-methionine salvage from methylthioadenosine"/>
    <property type="evidence" value="ECO:0007669"/>
    <property type="project" value="TreeGrafter"/>
</dbReference>
<dbReference type="GO" id="GO:0019323">
    <property type="term" value="P:pentose catabolic process"/>
    <property type="evidence" value="ECO:0007669"/>
    <property type="project" value="UniProtKB-UniRule"/>
</dbReference>
<dbReference type="FunFam" id="1.20.120.420:FF:000001">
    <property type="entry name" value="Methylthioribose-1-phosphate isomerase"/>
    <property type="match status" value="1"/>
</dbReference>
<dbReference type="FunFam" id="3.40.50.10470:FF:000006">
    <property type="entry name" value="Methylthioribose-1-phosphate isomerase"/>
    <property type="match status" value="1"/>
</dbReference>
<dbReference type="Gene3D" id="1.20.120.420">
    <property type="entry name" value="translation initiation factor eif-2b, domain 1"/>
    <property type="match status" value="1"/>
</dbReference>
<dbReference type="Gene3D" id="3.40.50.10470">
    <property type="entry name" value="Translation initiation factor eif-2b, domain 2"/>
    <property type="match status" value="1"/>
</dbReference>
<dbReference type="HAMAP" id="MF_02229">
    <property type="entry name" value="Deoxyribose1P_isomerase"/>
    <property type="match status" value="1"/>
</dbReference>
<dbReference type="HAMAP" id="MF_01678">
    <property type="entry name" value="Salvage_MtnA"/>
    <property type="match status" value="1"/>
</dbReference>
<dbReference type="InterPro" id="IPR043679">
    <property type="entry name" value="Deoxyribose1P_isomerase_DrdI"/>
</dbReference>
<dbReference type="InterPro" id="IPR000649">
    <property type="entry name" value="IF-2B-related"/>
</dbReference>
<dbReference type="InterPro" id="IPR005251">
    <property type="entry name" value="IF-M1Pi"/>
</dbReference>
<dbReference type="InterPro" id="IPR042529">
    <property type="entry name" value="IF_2B-like_C"/>
</dbReference>
<dbReference type="InterPro" id="IPR011559">
    <property type="entry name" value="Initiation_fac_2B_a/b/d"/>
</dbReference>
<dbReference type="InterPro" id="IPR027363">
    <property type="entry name" value="M1Pi_N"/>
</dbReference>
<dbReference type="InterPro" id="IPR037171">
    <property type="entry name" value="NagB/RpiA_transferase-like"/>
</dbReference>
<dbReference type="NCBIfam" id="TIGR00524">
    <property type="entry name" value="eIF-2B_rel"/>
    <property type="match status" value="1"/>
</dbReference>
<dbReference type="NCBIfam" id="NF004326">
    <property type="entry name" value="PRK05720.1"/>
    <property type="match status" value="1"/>
</dbReference>
<dbReference type="NCBIfam" id="TIGR00512">
    <property type="entry name" value="salvage_mtnA"/>
    <property type="match status" value="1"/>
</dbReference>
<dbReference type="PANTHER" id="PTHR43475">
    <property type="entry name" value="METHYLTHIORIBOSE-1-PHOSPHATE ISOMERASE"/>
    <property type="match status" value="1"/>
</dbReference>
<dbReference type="PANTHER" id="PTHR43475:SF1">
    <property type="entry name" value="METHYLTHIORIBOSE-1-PHOSPHATE ISOMERASE"/>
    <property type="match status" value="1"/>
</dbReference>
<dbReference type="Pfam" id="PF01008">
    <property type="entry name" value="IF-2B"/>
    <property type="match status" value="1"/>
</dbReference>
<dbReference type="SUPFAM" id="SSF100950">
    <property type="entry name" value="NagB/RpiA/CoA transferase-like"/>
    <property type="match status" value="1"/>
</dbReference>
<sequence>MAELLAIKWDDNRDKLILLDQTILPNKIEYIEYDTAEGVYDSIKDMIVRGAPAIGVTAAYGLYFAAKVAPEDNFENFFKYLKEKSSYLDSSRPTAVNLSWALKVMESKALENKDKDVKEIKSILREEAKRIHEEDIEICKAIGENLITLLKDGVGILTHCNAGQLATSKYGTATSPMYLAKEKGWNFKVYSDETRPRLQGSTLTALELYEAGIDVTTITDNMAAMVMSQGKIDAVIVGCDRIAANGDTANKIGTMGVSILAKYFGIPMYIAAPTPSIDMNTKTGKDIPIEERNSEEITSRFGVWTAPKGVKVYNPGFDVTPHENITAIVTEKGIVYPPFKENLKKLFEK</sequence>